<comment type="function">
    <text evidence="1">Catalyzes the GTP-dependent ribosomal translocation step during translation elongation. During this step, the ribosome changes from the pre-translocational (PRE) to the post-translocational (POST) state as the newly formed A-site-bound peptidyl-tRNA and P-site-bound deacylated tRNA move to the P and E sites, respectively. Catalyzes the coordinated movement of the two tRNA molecules, the mRNA and conformational changes in the ribosome.</text>
</comment>
<comment type="subcellular location">
    <subcellularLocation>
        <location evidence="1">Cytoplasm</location>
    </subcellularLocation>
</comment>
<comment type="similarity">
    <text evidence="1">Belongs to the TRAFAC class translation factor GTPase superfamily. Classic translation factor GTPase family. EF-G/EF-2 subfamily.</text>
</comment>
<gene>
    <name evidence="1" type="primary">fusA</name>
    <name type="ordered locus">BLD_0853</name>
</gene>
<organism>
    <name type="scientific">Bifidobacterium longum (strain DJO10A)</name>
    <dbReference type="NCBI Taxonomy" id="205913"/>
    <lineage>
        <taxon>Bacteria</taxon>
        <taxon>Bacillati</taxon>
        <taxon>Actinomycetota</taxon>
        <taxon>Actinomycetes</taxon>
        <taxon>Bifidobacteriales</taxon>
        <taxon>Bifidobacteriaceae</taxon>
        <taxon>Bifidobacterium</taxon>
    </lineage>
</organism>
<proteinExistence type="inferred from homology"/>
<feature type="chain" id="PRO_1000091693" description="Elongation factor G">
    <location>
        <begin position="1"/>
        <end position="707"/>
    </location>
</feature>
<feature type="domain" description="tr-type G">
    <location>
        <begin position="9"/>
        <end position="293"/>
    </location>
</feature>
<feature type="binding site" evidence="1">
    <location>
        <begin position="18"/>
        <end position="25"/>
    </location>
    <ligand>
        <name>GTP</name>
        <dbReference type="ChEBI" id="CHEBI:37565"/>
    </ligand>
</feature>
<feature type="binding site" evidence="1">
    <location>
        <begin position="90"/>
        <end position="94"/>
    </location>
    <ligand>
        <name>GTP</name>
        <dbReference type="ChEBI" id="CHEBI:37565"/>
    </ligand>
</feature>
<feature type="binding site" evidence="1">
    <location>
        <begin position="144"/>
        <end position="147"/>
    </location>
    <ligand>
        <name>GTP</name>
        <dbReference type="ChEBI" id="CHEBI:37565"/>
    </ligand>
</feature>
<protein>
    <recommendedName>
        <fullName evidence="1">Elongation factor G</fullName>
        <shortName evidence="1">EF-G</shortName>
    </recommendedName>
</protein>
<evidence type="ECO:0000255" key="1">
    <source>
        <dbReference type="HAMAP-Rule" id="MF_00054"/>
    </source>
</evidence>
<accession>B3DT30</accession>
<keyword id="KW-0963">Cytoplasm</keyword>
<keyword id="KW-0251">Elongation factor</keyword>
<keyword id="KW-0342">GTP-binding</keyword>
<keyword id="KW-0547">Nucleotide-binding</keyword>
<keyword id="KW-0648">Protein biosynthesis</keyword>
<dbReference type="EMBL" id="CP000605">
    <property type="protein sequence ID" value="ACD98299.1"/>
    <property type="molecule type" value="Genomic_DNA"/>
</dbReference>
<dbReference type="RefSeq" id="WP_003832662.1">
    <property type="nucleotide sequence ID" value="NZ_AABM02000006.1"/>
</dbReference>
<dbReference type="SMR" id="B3DT30"/>
<dbReference type="GeneID" id="69577754"/>
<dbReference type="KEGG" id="blj:BLD_0853"/>
<dbReference type="HOGENOM" id="CLU_002794_4_1_11"/>
<dbReference type="Proteomes" id="UP000002419">
    <property type="component" value="Chromosome"/>
</dbReference>
<dbReference type="GO" id="GO:0005737">
    <property type="term" value="C:cytoplasm"/>
    <property type="evidence" value="ECO:0007669"/>
    <property type="project" value="UniProtKB-SubCell"/>
</dbReference>
<dbReference type="GO" id="GO:0005525">
    <property type="term" value="F:GTP binding"/>
    <property type="evidence" value="ECO:0007669"/>
    <property type="project" value="UniProtKB-UniRule"/>
</dbReference>
<dbReference type="GO" id="GO:0003924">
    <property type="term" value="F:GTPase activity"/>
    <property type="evidence" value="ECO:0007669"/>
    <property type="project" value="InterPro"/>
</dbReference>
<dbReference type="GO" id="GO:0003746">
    <property type="term" value="F:translation elongation factor activity"/>
    <property type="evidence" value="ECO:0007669"/>
    <property type="project" value="UniProtKB-UniRule"/>
</dbReference>
<dbReference type="GO" id="GO:0032790">
    <property type="term" value="P:ribosome disassembly"/>
    <property type="evidence" value="ECO:0007669"/>
    <property type="project" value="TreeGrafter"/>
</dbReference>
<dbReference type="CDD" id="cd01886">
    <property type="entry name" value="EF-G"/>
    <property type="match status" value="1"/>
</dbReference>
<dbReference type="CDD" id="cd16262">
    <property type="entry name" value="EFG_III"/>
    <property type="match status" value="1"/>
</dbReference>
<dbReference type="CDD" id="cd01434">
    <property type="entry name" value="EFG_mtEFG1_IV"/>
    <property type="match status" value="1"/>
</dbReference>
<dbReference type="CDD" id="cd03713">
    <property type="entry name" value="EFG_mtEFG_C"/>
    <property type="match status" value="1"/>
</dbReference>
<dbReference type="CDD" id="cd04088">
    <property type="entry name" value="EFG_mtEFG_II"/>
    <property type="match status" value="1"/>
</dbReference>
<dbReference type="FunFam" id="2.40.30.10:FF:000006">
    <property type="entry name" value="Elongation factor G"/>
    <property type="match status" value="1"/>
</dbReference>
<dbReference type="FunFam" id="3.30.230.10:FF:000003">
    <property type="entry name" value="Elongation factor G"/>
    <property type="match status" value="1"/>
</dbReference>
<dbReference type="FunFam" id="3.30.70.240:FF:000001">
    <property type="entry name" value="Elongation factor G"/>
    <property type="match status" value="1"/>
</dbReference>
<dbReference type="FunFam" id="3.30.70.870:FF:000001">
    <property type="entry name" value="Elongation factor G"/>
    <property type="match status" value="1"/>
</dbReference>
<dbReference type="FunFam" id="3.40.50.300:FF:000029">
    <property type="entry name" value="Elongation factor G"/>
    <property type="match status" value="1"/>
</dbReference>
<dbReference type="Gene3D" id="3.30.230.10">
    <property type="match status" value="1"/>
</dbReference>
<dbReference type="Gene3D" id="3.30.70.240">
    <property type="match status" value="1"/>
</dbReference>
<dbReference type="Gene3D" id="3.30.70.870">
    <property type="entry name" value="Elongation Factor G (Translational Gtpase), domain 3"/>
    <property type="match status" value="1"/>
</dbReference>
<dbReference type="Gene3D" id="3.40.50.300">
    <property type="entry name" value="P-loop containing nucleotide triphosphate hydrolases"/>
    <property type="match status" value="1"/>
</dbReference>
<dbReference type="Gene3D" id="2.40.30.10">
    <property type="entry name" value="Translation factors"/>
    <property type="match status" value="1"/>
</dbReference>
<dbReference type="HAMAP" id="MF_00054_B">
    <property type="entry name" value="EF_G_EF_2_B"/>
    <property type="match status" value="1"/>
</dbReference>
<dbReference type="InterPro" id="IPR053905">
    <property type="entry name" value="EF-G-like_DII"/>
</dbReference>
<dbReference type="InterPro" id="IPR041095">
    <property type="entry name" value="EFG_II"/>
</dbReference>
<dbReference type="InterPro" id="IPR009022">
    <property type="entry name" value="EFG_III"/>
</dbReference>
<dbReference type="InterPro" id="IPR035647">
    <property type="entry name" value="EFG_III/V"/>
</dbReference>
<dbReference type="InterPro" id="IPR047872">
    <property type="entry name" value="EFG_IV"/>
</dbReference>
<dbReference type="InterPro" id="IPR035649">
    <property type="entry name" value="EFG_V"/>
</dbReference>
<dbReference type="InterPro" id="IPR000640">
    <property type="entry name" value="EFG_V-like"/>
</dbReference>
<dbReference type="InterPro" id="IPR031157">
    <property type="entry name" value="G_TR_CS"/>
</dbReference>
<dbReference type="InterPro" id="IPR027417">
    <property type="entry name" value="P-loop_NTPase"/>
</dbReference>
<dbReference type="InterPro" id="IPR020568">
    <property type="entry name" value="Ribosomal_Su5_D2-typ_SF"/>
</dbReference>
<dbReference type="InterPro" id="IPR014721">
    <property type="entry name" value="Ribsml_uS5_D2-typ_fold_subgr"/>
</dbReference>
<dbReference type="InterPro" id="IPR005225">
    <property type="entry name" value="Small_GTP-bd"/>
</dbReference>
<dbReference type="InterPro" id="IPR000795">
    <property type="entry name" value="T_Tr_GTP-bd_dom"/>
</dbReference>
<dbReference type="InterPro" id="IPR009000">
    <property type="entry name" value="Transl_B-barrel_sf"/>
</dbReference>
<dbReference type="InterPro" id="IPR004540">
    <property type="entry name" value="Transl_elong_EFG/EF2"/>
</dbReference>
<dbReference type="InterPro" id="IPR005517">
    <property type="entry name" value="Transl_elong_EFG/EF2_IV"/>
</dbReference>
<dbReference type="NCBIfam" id="TIGR00484">
    <property type="entry name" value="EF-G"/>
    <property type="match status" value="1"/>
</dbReference>
<dbReference type="NCBIfam" id="NF009381">
    <property type="entry name" value="PRK12740.1-5"/>
    <property type="match status" value="1"/>
</dbReference>
<dbReference type="NCBIfam" id="TIGR00231">
    <property type="entry name" value="small_GTP"/>
    <property type="match status" value="1"/>
</dbReference>
<dbReference type="PANTHER" id="PTHR43261:SF1">
    <property type="entry name" value="RIBOSOME-RELEASING FACTOR 2, MITOCHONDRIAL"/>
    <property type="match status" value="1"/>
</dbReference>
<dbReference type="PANTHER" id="PTHR43261">
    <property type="entry name" value="TRANSLATION ELONGATION FACTOR G-RELATED"/>
    <property type="match status" value="1"/>
</dbReference>
<dbReference type="Pfam" id="PF22042">
    <property type="entry name" value="EF-G_D2"/>
    <property type="match status" value="1"/>
</dbReference>
<dbReference type="Pfam" id="PF00679">
    <property type="entry name" value="EFG_C"/>
    <property type="match status" value="1"/>
</dbReference>
<dbReference type="Pfam" id="PF14492">
    <property type="entry name" value="EFG_III"/>
    <property type="match status" value="1"/>
</dbReference>
<dbReference type="Pfam" id="PF03764">
    <property type="entry name" value="EFG_IV"/>
    <property type="match status" value="1"/>
</dbReference>
<dbReference type="Pfam" id="PF00009">
    <property type="entry name" value="GTP_EFTU"/>
    <property type="match status" value="1"/>
</dbReference>
<dbReference type="PRINTS" id="PR00315">
    <property type="entry name" value="ELONGATNFCT"/>
</dbReference>
<dbReference type="SMART" id="SM00838">
    <property type="entry name" value="EFG_C"/>
    <property type="match status" value="1"/>
</dbReference>
<dbReference type="SMART" id="SM00889">
    <property type="entry name" value="EFG_IV"/>
    <property type="match status" value="1"/>
</dbReference>
<dbReference type="SUPFAM" id="SSF54980">
    <property type="entry name" value="EF-G C-terminal domain-like"/>
    <property type="match status" value="2"/>
</dbReference>
<dbReference type="SUPFAM" id="SSF52540">
    <property type="entry name" value="P-loop containing nucleoside triphosphate hydrolases"/>
    <property type="match status" value="1"/>
</dbReference>
<dbReference type="SUPFAM" id="SSF54211">
    <property type="entry name" value="Ribosomal protein S5 domain 2-like"/>
    <property type="match status" value="1"/>
</dbReference>
<dbReference type="SUPFAM" id="SSF50447">
    <property type="entry name" value="Translation proteins"/>
    <property type="match status" value="1"/>
</dbReference>
<dbReference type="PROSITE" id="PS00301">
    <property type="entry name" value="G_TR_1"/>
    <property type="match status" value="1"/>
</dbReference>
<dbReference type="PROSITE" id="PS51722">
    <property type="entry name" value="G_TR_2"/>
    <property type="match status" value="1"/>
</dbReference>
<sequence length="707" mass="78137">MAEEISDLHDVRNIGIMAHIDAGKTTTTERILFYTGKNYKIGETHDGASTMDFMAQEQERGITIQSAATTCFWSRQSHDTKDKFQINIIDTPGHVDFTAEVERSLRVLDGAVAVFDGKEGVEPQSETVWRQADKYGVPRICFINKMDKLGANFYYSVDTIKEKLGATPIVMQLPIGSENDFTGVVDLVEMQAYVWNGTEELGAKYDTTEIPDDLKDKAQEYHEKLVEAAAEADDDLMNKFFEDGDLSKEDIRAGVRKLTIAKEAFPIFCGSAFKDKGVQPMLDGVVDYLPSPEDVPAIKGYKPGDESVEIDRHPVKSDPFAALVFKISTHPFYGKLVFVRVYSGSVVPGDSVLDSTREKKERIGKIFQMHADKENPMDRADAGNIYTFVGLKNVTTGDTLCAIDDPITLDSMTFPDPVIQVAVEPKTKADQEKMGIALSKLAEEDPTFQVTTDEESGQTLIAGMGELQLDIIVDRMRREFKVECNQGKPQVAYRETIRKAVMDQGYTHKKQTGGSGQFAKVLMNFEPLDTTEGKTFEFENKVTGGHISAEFIGPIEAGVKEAMESGVLAGFPVVGVKATVTDGQMHPVDSSEMAFKLAGSMCFKEAAPKAKPVILEPIMKVEVRTPEEYMGEVIGDLNQRRGNIQSMTDGVGVKVIDAKVPLSEMFGYIGDLRSKTQGRAMFTMEMDSYDEVPKSVSEEIIKAQRGE</sequence>
<reference key="1">
    <citation type="journal article" date="2008" name="BMC Genomics">
        <title>Comparative genomic analysis of the gut bacterium Bifidobacterium longum reveals loci susceptible to deletion during pure culture growth.</title>
        <authorList>
            <person name="Lee J.H."/>
            <person name="Karamychev V.N."/>
            <person name="Kozyavkin S.A."/>
            <person name="Mills D."/>
            <person name="Pavlov A.R."/>
            <person name="Pavlova N.V."/>
            <person name="Polouchine N.N."/>
            <person name="Richardson P.M."/>
            <person name="Shakhova V.V."/>
            <person name="Slesarev A.I."/>
            <person name="Weimer B."/>
            <person name="O'Sullivan D.J."/>
        </authorList>
    </citation>
    <scope>NUCLEOTIDE SEQUENCE [LARGE SCALE GENOMIC DNA]</scope>
    <source>
        <strain>DJO10A</strain>
    </source>
</reference>
<name>EFG_BIFLD</name>